<dbReference type="EC" id="2.7.1.39" evidence="1"/>
<dbReference type="EMBL" id="CP000250">
    <property type="protein sequence ID" value="ABD06051.1"/>
    <property type="molecule type" value="Genomic_DNA"/>
</dbReference>
<dbReference type="RefSeq" id="WP_011440239.1">
    <property type="nucleotide sequence ID" value="NC_007778.1"/>
</dbReference>
<dbReference type="SMR" id="Q2J0F9"/>
<dbReference type="STRING" id="316058.RPB_1341"/>
<dbReference type="KEGG" id="rpb:RPB_1341"/>
<dbReference type="eggNOG" id="COG2334">
    <property type="taxonomic scope" value="Bacteria"/>
</dbReference>
<dbReference type="HOGENOM" id="CLU_053300_1_0_5"/>
<dbReference type="OrthoDB" id="9777460at2"/>
<dbReference type="UniPathway" id="UPA00050">
    <property type="reaction ID" value="UER00064"/>
</dbReference>
<dbReference type="Proteomes" id="UP000008809">
    <property type="component" value="Chromosome"/>
</dbReference>
<dbReference type="GO" id="GO:0005524">
    <property type="term" value="F:ATP binding"/>
    <property type="evidence" value="ECO:0007669"/>
    <property type="project" value="UniProtKB-KW"/>
</dbReference>
<dbReference type="GO" id="GO:0004413">
    <property type="term" value="F:homoserine kinase activity"/>
    <property type="evidence" value="ECO:0007669"/>
    <property type="project" value="UniProtKB-UniRule"/>
</dbReference>
<dbReference type="GO" id="GO:0009088">
    <property type="term" value="P:threonine biosynthetic process"/>
    <property type="evidence" value="ECO:0007669"/>
    <property type="project" value="UniProtKB-UniRule"/>
</dbReference>
<dbReference type="CDD" id="cd05153">
    <property type="entry name" value="HomoserineK_II"/>
    <property type="match status" value="1"/>
</dbReference>
<dbReference type="FunFam" id="3.90.1200.10:FF:000041">
    <property type="entry name" value="Homoserine kinase"/>
    <property type="match status" value="1"/>
</dbReference>
<dbReference type="Gene3D" id="3.90.1200.10">
    <property type="match status" value="1"/>
</dbReference>
<dbReference type="Gene3D" id="3.30.200.20">
    <property type="entry name" value="Phosphorylase Kinase, domain 1"/>
    <property type="match status" value="1"/>
</dbReference>
<dbReference type="HAMAP" id="MF_00301">
    <property type="entry name" value="Homoser_kinase_2"/>
    <property type="match status" value="1"/>
</dbReference>
<dbReference type="InterPro" id="IPR002575">
    <property type="entry name" value="Aminoglycoside_PTrfase"/>
</dbReference>
<dbReference type="InterPro" id="IPR005280">
    <property type="entry name" value="Homoserine_kinase_II"/>
</dbReference>
<dbReference type="InterPro" id="IPR011009">
    <property type="entry name" value="Kinase-like_dom_sf"/>
</dbReference>
<dbReference type="InterPro" id="IPR050249">
    <property type="entry name" value="Pseudomonas-type_ThrB"/>
</dbReference>
<dbReference type="NCBIfam" id="NF003558">
    <property type="entry name" value="PRK05231.1"/>
    <property type="match status" value="1"/>
</dbReference>
<dbReference type="NCBIfam" id="TIGR00938">
    <property type="entry name" value="thrB_alt"/>
    <property type="match status" value="1"/>
</dbReference>
<dbReference type="PANTHER" id="PTHR21064:SF6">
    <property type="entry name" value="AMINOGLYCOSIDE PHOSPHOTRANSFERASE DOMAIN-CONTAINING PROTEIN"/>
    <property type="match status" value="1"/>
</dbReference>
<dbReference type="PANTHER" id="PTHR21064">
    <property type="entry name" value="AMINOGLYCOSIDE PHOSPHOTRANSFERASE DOMAIN-CONTAINING PROTEIN-RELATED"/>
    <property type="match status" value="1"/>
</dbReference>
<dbReference type="Pfam" id="PF01636">
    <property type="entry name" value="APH"/>
    <property type="match status" value="1"/>
</dbReference>
<dbReference type="SUPFAM" id="SSF56112">
    <property type="entry name" value="Protein kinase-like (PK-like)"/>
    <property type="match status" value="1"/>
</dbReference>
<sequence length="326" mass="35832">MAVYTDVAADDLADFLKSYEIGDLLSYKGIAEGVENTNFLLHTTRGSFILTLYEKRVASEDLPYFLALMAHLAARGVSCPQPEKTRDGEICGALSGRPAVIINFLEGVWPRRPNAVHCAGVGEALAKMHLAGLDFPQHRANPLSVSGWRPLFDLAAARADEIQPGLRDFIAAELDHLEGRWPRHLPTGVIHADLFPDNVFFIGDTLSGLIDFPFSCNDILAYDVAICLNAWCFEPDHAFNVTKARALLNAYQRGRALSEAEQTALPLLARGAAMRFLLTRLVDVLDVPEGALVKPKDPLEYFRKLRFQQNVASIRDYGVEAAGAVA</sequence>
<name>KHSE_RHOP2</name>
<reference key="1">
    <citation type="submission" date="2006-01" db="EMBL/GenBank/DDBJ databases">
        <title>Complete sequence of Rhodopseudomonas palustris HaA2.</title>
        <authorList>
            <consortium name="US DOE Joint Genome Institute"/>
            <person name="Copeland A."/>
            <person name="Lucas S."/>
            <person name="Lapidus A."/>
            <person name="Barry K."/>
            <person name="Detter J.C."/>
            <person name="Glavina T."/>
            <person name="Hammon N."/>
            <person name="Israni S."/>
            <person name="Pitluck S."/>
            <person name="Chain P."/>
            <person name="Malfatti S."/>
            <person name="Shin M."/>
            <person name="Vergez L."/>
            <person name="Schmutz J."/>
            <person name="Larimer F."/>
            <person name="Land M."/>
            <person name="Hauser L."/>
            <person name="Pelletier D.A."/>
            <person name="Kyrpides N."/>
            <person name="Anderson I."/>
            <person name="Oda Y."/>
            <person name="Harwood C.S."/>
            <person name="Richardson P."/>
        </authorList>
    </citation>
    <scope>NUCLEOTIDE SEQUENCE [LARGE SCALE GENOMIC DNA]</scope>
    <source>
        <strain>HaA2</strain>
    </source>
</reference>
<proteinExistence type="inferred from homology"/>
<evidence type="ECO:0000255" key="1">
    <source>
        <dbReference type="HAMAP-Rule" id="MF_00301"/>
    </source>
</evidence>
<accession>Q2J0F9</accession>
<comment type="catalytic activity">
    <reaction evidence="1">
        <text>L-homoserine + ATP = O-phospho-L-homoserine + ADP + H(+)</text>
        <dbReference type="Rhea" id="RHEA:13985"/>
        <dbReference type="ChEBI" id="CHEBI:15378"/>
        <dbReference type="ChEBI" id="CHEBI:30616"/>
        <dbReference type="ChEBI" id="CHEBI:57476"/>
        <dbReference type="ChEBI" id="CHEBI:57590"/>
        <dbReference type="ChEBI" id="CHEBI:456216"/>
        <dbReference type="EC" id="2.7.1.39"/>
    </reaction>
</comment>
<comment type="pathway">
    <text evidence="1">Amino-acid biosynthesis; L-threonine biosynthesis; L-threonine from L-aspartate: step 4/5.</text>
</comment>
<comment type="similarity">
    <text evidence="1">Belongs to the pseudomonas-type ThrB family.</text>
</comment>
<organism>
    <name type="scientific">Rhodopseudomonas palustris (strain HaA2)</name>
    <dbReference type="NCBI Taxonomy" id="316058"/>
    <lineage>
        <taxon>Bacteria</taxon>
        <taxon>Pseudomonadati</taxon>
        <taxon>Pseudomonadota</taxon>
        <taxon>Alphaproteobacteria</taxon>
        <taxon>Hyphomicrobiales</taxon>
        <taxon>Nitrobacteraceae</taxon>
        <taxon>Rhodopseudomonas</taxon>
    </lineage>
</organism>
<gene>
    <name evidence="1" type="primary">thrB</name>
    <name type="ordered locus">RPB_1341</name>
</gene>
<protein>
    <recommendedName>
        <fullName evidence="1">Homoserine kinase</fullName>
        <shortName evidence="1">HK</shortName>
        <shortName evidence="1">HSK</shortName>
        <ecNumber evidence="1">2.7.1.39</ecNumber>
    </recommendedName>
</protein>
<keyword id="KW-0028">Amino-acid biosynthesis</keyword>
<keyword id="KW-0067">ATP-binding</keyword>
<keyword id="KW-0418">Kinase</keyword>
<keyword id="KW-0547">Nucleotide-binding</keyword>
<keyword id="KW-1185">Reference proteome</keyword>
<keyword id="KW-0791">Threonine biosynthesis</keyword>
<keyword id="KW-0808">Transferase</keyword>
<feature type="chain" id="PRO_0000300806" description="Homoserine kinase">
    <location>
        <begin position="1"/>
        <end position="326"/>
    </location>
</feature>